<feature type="signal peptide" evidence="2">
    <location>
        <begin position="1"/>
        <end position="19"/>
    </location>
</feature>
<feature type="chain" id="PRO_5004327679" description="Surface lipoprotein assembly modifier 2" evidence="2">
    <location>
        <begin position="20"/>
        <end position="505"/>
    </location>
</feature>
<feature type="transmembrane region" description="Beta stranded" evidence="2">
    <location>
        <begin position="190"/>
        <end position="200"/>
    </location>
</feature>
<feature type="transmembrane region" description="Beta stranded" evidence="2">
    <location>
        <begin position="232"/>
        <end position="243"/>
    </location>
</feature>
<feature type="transmembrane region" description="Beta stranded" evidence="2">
    <location>
        <begin position="248"/>
        <end position="258"/>
    </location>
</feature>
<feature type="transmembrane region" description="Beta stranded" evidence="2">
    <location>
        <begin position="273"/>
        <end position="283"/>
    </location>
</feature>
<feature type="transmembrane region" description="Beta stranded" evidence="2">
    <location>
        <begin position="287"/>
        <end position="297"/>
    </location>
</feature>
<feature type="transmembrane region" description="Beta stranded" evidence="2">
    <location>
        <begin position="326"/>
        <end position="335"/>
    </location>
</feature>
<feature type="transmembrane region" description="Beta stranded" evidence="2">
    <location>
        <begin position="340"/>
        <end position="350"/>
    </location>
</feature>
<feature type="transmembrane region" description="Beta stranded" evidence="2">
    <location>
        <begin position="368"/>
        <end position="377"/>
    </location>
</feature>
<feature type="transmembrane region" description="Beta stranded" evidence="2">
    <location>
        <begin position="381"/>
        <end position="391"/>
    </location>
</feature>
<feature type="transmembrane region" description="Beta stranded" evidence="2">
    <location>
        <begin position="411"/>
        <end position="420"/>
    </location>
</feature>
<feature type="transmembrane region" description="Beta stranded" evidence="2">
    <location>
        <begin position="427"/>
        <end position="437"/>
    </location>
</feature>
<feature type="transmembrane region" description="Beta stranded" evidence="2">
    <location>
        <begin position="456"/>
        <end position="465"/>
    </location>
</feature>
<feature type="transmembrane region" description="Beta stranded" evidence="2">
    <location>
        <begin position="472"/>
        <end position="482"/>
    </location>
</feature>
<feature type="transmembrane region" description="Beta stranded" evidence="2">
    <location>
        <begin position="495"/>
        <end position="505"/>
    </location>
</feature>
<feature type="region of interest" description="N-terminal domain" evidence="1">
    <location>
        <begin position="23"/>
        <end position="188"/>
    </location>
</feature>
<feature type="region of interest" description="C-terminal probable beta barrel" evidence="1">
    <location>
        <begin position="189"/>
        <end position="505"/>
    </location>
</feature>
<gene>
    <name type="ordered locus">NMB1971</name>
</gene>
<sequence length="505" mass="56756">MLYFRYGFLVVWCAAGVSAAYGADAPAILDDKALLQVQRSVSDKWAESDWKVENDAPRVVDGDFLLAHPKMLEHSLRDALNGNQADLIASLADLYAKLPDYDAVLYGRARALLAKLAGRPAEAVARYRELHGENAADERILLDLAAAEFDDFRLKSAERHFAEAAKLDLPAPVLENVGRFRKKTEGLTGWRFSGGISPAVNRNANNAAPQYCRQNGGRQICSVSRAERAAGLNYEIEAEKLTPLADNHYLLFRSNIGGTSYYFSKKSAYDDGFGRAYLGWQYKNARQTAGILPFYQVQLSGSDGFDAKTKRVNNRRLPPYMLAHGVGVQLSHTYRPNPGWQFSVALEHYRQRYREQDRAEYNNGRQDGFYVSSAKRLGESATVFGGWQFVRFVPKRETVGGAVNNAAYRRNGVYAGWAQEWRQLGGLNSRVSASYARRNYKGIAAFSTEAQRNREWNVSLALSHDKLSYKGIVPALNYRFGRTESNVPYAKRRNSEVFVSADWRF</sequence>
<protein>
    <recommendedName>
        <fullName evidence="4">Surface lipoprotein assembly modifier 2</fullName>
        <shortName evidence="4">Slam2</shortName>
    </recommendedName>
</protein>
<accession>Q9JXM5</accession>
<keyword id="KW-0998">Cell outer membrane</keyword>
<keyword id="KW-0472">Membrane</keyword>
<keyword id="KW-1185">Reference proteome</keyword>
<keyword id="KW-0732">Signal</keyword>
<keyword id="KW-0812">Transmembrane</keyword>
<keyword id="KW-1134">Transmembrane beta strand</keyword>
<reference key="1">
    <citation type="journal article" date="2000" name="Science">
        <title>Complete genome sequence of Neisseria meningitidis serogroup B strain MC58.</title>
        <authorList>
            <person name="Tettelin H."/>
            <person name="Saunders N.J."/>
            <person name="Heidelberg J.F."/>
            <person name="Jeffries A.C."/>
            <person name="Nelson K.E."/>
            <person name="Eisen J.A."/>
            <person name="Ketchum K.A."/>
            <person name="Hood D.W."/>
            <person name="Peden J.F."/>
            <person name="Dodson R.J."/>
            <person name="Nelson W.C."/>
            <person name="Gwinn M.L."/>
            <person name="DeBoy R.T."/>
            <person name="Peterson J.D."/>
            <person name="Hickey E.K."/>
            <person name="Haft D.H."/>
            <person name="Salzberg S.L."/>
            <person name="White O."/>
            <person name="Fleischmann R.D."/>
            <person name="Dougherty B.A."/>
            <person name="Mason T.M."/>
            <person name="Ciecko A."/>
            <person name="Parksey D.S."/>
            <person name="Blair E."/>
            <person name="Cittone H."/>
            <person name="Clark E.B."/>
            <person name="Cotton M.D."/>
            <person name="Utterback T.R."/>
            <person name="Khouri H.M."/>
            <person name="Qin H."/>
            <person name="Vamathevan J.J."/>
            <person name="Gill J."/>
            <person name="Scarlato V."/>
            <person name="Masignani V."/>
            <person name="Pizza M."/>
            <person name="Grandi G."/>
            <person name="Sun L."/>
            <person name="Smith H.O."/>
            <person name="Fraser C.M."/>
            <person name="Moxon E.R."/>
            <person name="Rappuoli R."/>
            <person name="Venter J.C."/>
        </authorList>
    </citation>
    <scope>NUCLEOTIDE SEQUENCE [LARGE SCALE GENOMIC DNA]</scope>
    <source>
        <strain>ATCC BAA-335 / MC58</strain>
    </source>
</reference>
<reference key="2">
    <citation type="journal article" date="2016" name="Nat. Microbiol.">
        <title>Slam is an outer membrane protein that is required for the surface display of lipidated virulence factors in Neisseria.</title>
        <authorList>
            <person name="Hooda Y."/>
            <person name="Lai C.C."/>
            <person name="Judd A."/>
            <person name="Buckwalter C.M."/>
            <person name="Shin H.E."/>
            <person name="Gray-Owen S.D."/>
            <person name="Moraes T.F."/>
        </authorList>
    </citation>
    <scope>FUNCTION</scope>
    <scope>SUBCELLULAR LOCATION</scope>
    <source>
        <strain>ATCC BAA-335 / MC58</strain>
    </source>
</reference>
<dbReference type="EMBL" id="AE002098">
    <property type="protein sequence ID" value="AAF42300.1"/>
    <property type="molecule type" value="Genomic_DNA"/>
</dbReference>
<dbReference type="PIR" id="B81021">
    <property type="entry name" value="B81021"/>
</dbReference>
<dbReference type="RefSeq" id="NP_274965.1">
    <property type="nucleotide sequence ID" value="NC_003112.2"/>
</dbReference>
<dbReference type="RefSeq" id="WP_002244327.1">
    <property type="nucleotide sequence ID" value="NC_003112.2"/>
</dbReference>
<dbReference type="STRING" id="122586.NMB1971"/>
<dbReference type="PaxDb" id="122586-NMB1971"/>
<dbReference type="KEGG" id="nme:NMB1971"/>
<dbReference type="PATRIC" id="fig|122586.8.peg.2510"/>
<dbReference type="HOGENOM" id="CLU_034927_1_0_4"/>
<dbReference type="InParanoid" id="Q9JXM5"/>
<dbReference type="OrthoDB" id="8601272at2"/>
<dbReference type="Proteomes" id="UP000000425">
    <property type="component" value="Chromosome"/>
</dbReference>
<dbReference type="GO" id="GO:0009279">
    <property type="term" value="C:cell outer membrane"/>
    <property type="evidence" value="ECO:0007669"/>
    <property type="project" value="UniProtKB-SubCell"/>
</dbReference>
<dbReference type="InterPro" id="IPR007655">
    <property type="entry name" value="Slam_C_b-barrel"/>
</dbReference>
<dbReference type="Pfam" id="PF04575">
    <property type="entry name" value="SlipAM"/>
    <property type="match status" value="1"/>
</dbReference>
<dbReference type="Pfam" id="PF24575">
    <property type="entry name" value="TPR_Slam"/>
    <property type="match status" value="1"/>
</dbReference>
<dbReference type="SUPFAM" id="SSF56935">
    <property type="entry name" value="Porins"/>
    <property type="match status" value="1"/>
</dbReference>
<comment type="function">
    <text evidence="3">Required for correct export to the cell surface of cell outer membrane lipoprotein HpuA heterologously in E.coli (hpuA does not exist in N.meningitidis strain MC58).</text>
</comment>
<comment type="subcellular location">
    <subcellularLocation>
        <location evidence="6">Cell outer membrane</location>
        <topology evidence="2">Multi-pass membrane protein</topology>
    </subcellularLocation>
</comment>
<comment type="domain">
    <text evidence="1">Consists of a soluble N-terminal domain and C-terminal probable beta-barrel in the outer membrane with 14 predicted beta-strands.</text>
</comment>
<comment type="similarity">
    <text evidence="5">Belongs to the Slam family.</text>
</comment>
<organism>
    <name type="scientific">Neisseria meningitidis serogroup B (strain ATCC BAA-335 / MC58)</name>
    <dbReference type="NCBI Taxonomy" id="122586"/>
    <lineage>
        <taxon>Bacteria</taxon>
        <taxon>Pseudomonadati</taxon>
        <taxon>Pseudomonadota</taxon>
        <taxon>Betaproteobacteria</taxon>
        <taxon>Neisseriales</taxon>
        <taxon>Neisseriaceae</taxon>
        <taxon>Neisseria</taxon>
    </lineage>
</organism>
<evidence type="ECO:0000250" key="1">
    <source>
        <dbReference type="UniProtKB" id="Q9K165"/>
    </source>
</evidence>
<evidence type="ECO:0000255" key="2"/>
<evidence type="ECO:0000269" key="3">
    <source>
    </source>
</evidence>
<evidence type="ECO:0000303" key="4">
    <source>
    </source>
</evidence>
<evidence type="ECO:0000305" key="5"/>
<evidence type="ECO:0000305" key="6">
    <source>
    </source>
</evidence>
<proteinExistence type="inferred from homology"/>
<name>SLM2_NEIMB</name>